<sequence length="104" mass="11808">MSYAIFKHGGKQYKVVEGDIVLLDKMDKEPKALVELVEVLAVSKEGKLSCGKPFVNGAKIEAEVINEGRGKKVITFKKRRRKDSKTKRGFRRDFTRVRITKIVA</sequence>
<proteinExistence type="inferred from homology"/>
<keyword id="KW-1185">Reference proteome</keyword>
<keyword id="KW-0687">Ribonucleoprotein</keyword>
<keyword id="KW-0689">Ribosomal protein</keyword>
<keyword id="KW-0694">RNA-binding</keyword>
<keyword id="KW-0699">rRNA-binding</keyword>
<dbReference type="EMBL" id="AE000511">
    <property type="protein sequence ID" value="AAD07365.1"/>
    <property type="molecule type" value="Genomic_DNA"/>
</dbReference>
<dbReference type="PIR" id="H64556">
    <property type="entry name" value="H64556"/>
</dbReference>
<dbReference type="RefSeq" id="NP_207094.1">
    <property type="nucleotide sequence ID" value="NC_000915.1"/>
</dbReference>
<dbReference type="RefSeq" id="WP_000119318.1">
    <property type="nucleotide sequence ID" value="NC_018939.1"/>
</dbReference>
<dbReference type="SMR" id="P56046"/>
<dbReference type="FunCoup" id="P56046">
    <property type="interactions" value="413"/>
</dbReference>
<dbReference type="STRING" id="85962.HP_0296"/>
<dbReference type="PaxDb" id="85962-C694_01495"/>
<dbReference type="EnsemblBacteria" id="AAD07365">
    <property type="protein sequence ID" value="AAD07365"/>
    <property type="gene ID" value="HP_0296"/>
</dbReference>
<dbReference type="KEGG" id="heo:C694_01495"/>
<dbReference type="KEGG" id="hpy:HP_0296"/>
<dbReference type="PATRIC" id="fig|85962.47.peg.316"/>
<dbReference type="eggNOG" id="COG0261">
    <property type="taxonomic scope" value="Bacteria"/>
</dbReference>
<dbReference type="InParanoid" id="P56046"/>
<dbReference type="OrthoDB" id="9813334at2"/>
<dbReference type="PhylomeDB" id="P56046"/>
<dbReference type="Proteomes" id="UP000000429">
    <property type="component" value="Chromosome"/>
</dbReference>
<dbReference type="GO" id="GO:0005737">
    <property type="term" value="C:cytoplasm"/>
    <property type="evidence" value="ECO:0007669"/>
    <property type="project" value="UniProtKB-ARBA"/>
</dbReference>
<dbReference type="GO" id="GO:1990904">
    <property type="term" value="C:ribonucleoprotein complex"/>
    <property type="evidence" value="ECO:0007669"/>
    <property type="project" value="UniProtKB-KW"/>
</dbReference>
<dbReference type="GO" id="GO:0005840">
    <property type="term" value="C:ribosome"/>
    <property type="evidence" value="ECO:0007669"/>
    <property type="project" value="UniProtKB-KW"/>
</dbReference>
<dbReference type="GO" id="GO:0019843">
    <property type="term" value="F:rRNA binding"/>
    <property type="evidence" value="ECO:0007669"/>
    <property type="project" value="UniProtKB-UniRule"/>
</dbReference>
<dbReference type="GO" id="GO:0003735">
    <property type="term" value="F:structural constituent of ribosome"/>
    <property type="evidence" value="ECO:0000318"/>
    <property type="project" value="GO_Central"/>
</dbReference>
<dbReference type="GO" id="GO:0006412">
    <property type="term" value="P:translation"/>
    <property type="evidence" value="ECO:0007669"/>
    <property type="project" value="UniProtKB-UniRule"/>
</dbReference>
<dbReference type="HAMAP" id="MF_01363">
    <property type="entry name" value="Ribosomal_bL21"/>
    <property type="match status" value="1"/>
</dbReference>
<dbReference type="InterPro" id="IPR028909">
    <property type="entry name" value="bL21-like"/>
</dbReference>
<dbReference type="InterPro" id="IPR036164">
    <property type="entry name" value="bL21-like_sf"/>
</dbReference>
<dbReference type="InterPro" id="IPR001787">
    <property type="entry name" value="Ribosomal_bL21"/>
</dbReference>
<dbReference type="InterPro" id="IPR018258">
    <property type="entry name" value="Ribosomal_bL21_CS"/>
</dbReference>
<dbReference type="NCBIfam" id="TIGR00061">
    <property type="entry name" value="L21"/>
    <property type="match status" value="1"/>
</dbReference>
<dbReference type="PANTHER" id="PTHR21349">
    <property type="entry name" value="50S RIBOSOMAL PROTEIN L21"/>
    <property type="match status" value="1"/>
</dbReference>
<dbReference type="PANTHER" id="PTHR21349:SF0">
    <property type="entry name" value="LARGE RIBOSOMAL SUBUNIT PROTEIN BL21M"/>
    <property type="match status" value="1"/>
</dbReference>
<dbReference type="Pfam" id="PF00829">
    <property type="entry name" value="Ribosomal_L21p"/>
    <property type="match status" value="1"/>
</dbReference>
<dbReference type="SUPFAM" id="SSF141091">
    <property type="entry name" value="L21p-like"/>
    <property type="match status" value="1"/>
</dbReference>
<dbReference type="PROSITE" id="PS01169">
    <property type="entry name" value="RIBOSOMAL_L21"/>
    <property type="match status" value="1"/>
</dbReference>
<gene>
    <name evidence="1" type="primary">rplU</name>
    <name type="ordered locus">HP_0296</name>
</gene>
<organism>
    <name type="scientific">Helicobacter pylori (strain ATCC 700392 / 26695)</name>
    <name type="common">Campylobacter pylori</name>
    <dbReference type="NCBI Taxonomy" id="85962"/>
    <lineage>
        <taxon>Bacteria</taxon>
        <taxon>Pseudomonadati</taxon>
        <taxon>Campylobacterota</taxon>
        <taxon>Epsilonproteobacteria</taxon>
        <taxon>Campylobacterales</taxon>
        <taxon>Helicobacteraceae</taxon>
        <taxon>Helicobacter</taxon>
    </lineage>
</organism>
<comment type="function">
    <text evidence="1">This protein binds to 23S rRNA in the presence of protein L20.</text>
</comment>
<comment type="subunit">
    <text evidence="1">Part of the 50S ribosomal subunit. Contacts protein L20.</text>
</comment>
<comment type="similarity">
    <text evidence="1">Belongs to the bacterial ribosomal protein bL21 family.</text>
</comment>
<protein>
    <recommendedName>
        <fullName evidence="1">Large ribosomal subunit protein bL21</fullName>
    </recommendedName>
    <alternativeName>
        <fullName evidence="2">50S ribosomal protein L21</fullName>
    </alternativeName>
</protein>
<name>RL21_HELPY</name>
<reference key="1">
    <citation type="journal article" date="1997" name="Nature">
        <title>The complete genome sequence of the gastric pathogen Helicobacter pylori.</title>
        <authorList>
            <person name="Tomb J.-F."/>
            <person name="White O."/>
            <person name="Kerlavage A.R."/>
            <person name="Clayton R.A."/>
            <person name="Sutton G.G."/>
            <person name="Fleischmann R.D."/>
            <person name="Ketchum K.A."/>
            <person name="Klenk H.-P."/>
            <person name="Gill S.R."/>
            <person name="Dougherty B.A."/>
            <person name="Nelson K.E."/>
            <person name="Quackenbush J."/>
            <person name="Zhou L."/>
            <person name="Kirkness E.F."/>
            <person name="Peterson S.N."/>
            <person name="Loftus B.J."/>
            <person name="Richardson D.L."/>
            <person name="Dodson R.J."/>
            <person name="Khalak H.G."/>
            <person name="Glodek A."/>
            <person name="McKenney K."/>
            <person name="FitzGerald L.M."/>
            <person name="Lee N."/>
            <person name="Adams M.D."/>
            <person name="Hickey E.K."/>
            <person name="Berg D.E."/>
            <person name="Gocayne J.D."/>
            <person name="Utterback T.R."/>
            <person name="Peterson J.D."/>
            <person name="Kelley J.M."/>
            <person name="Cotton M.D."/>
            <person name="Weidman J.F."/>
            <person name="Fujii C."/>
            <person name="Bowman C."/>
            <person name="Watthey L."/>
            <person name="Wallin E."/>
            <person name="Hayes W.S."/>
            <person name="Borodovsky M."/>
            <person name="Karp P.D."/>
            <person name="Smith H.O."/>
            <person name="Fraser C.M."/>
            <person name="Venter J.C."/>
        </authorList>
    </citation>
    <scope>NUCLEOTIDE SEQUENCE [LARGE SCALE GENOMIC DNA]</scope>
    <source>
        <strain>ATCC 700392 / 26695</strain>
    </source>
</reference>
<feature type="chain" id="PRO_0000181003" description="Large ribosomal subunit protein bL21">
    <location>
        <begin position="1"/>
        <end position="104"/>
    </location>
</feature>
<evidence type="ECO:0000255" key="1">
    <source>
        <dbReference type="HAMAP-Rule" id="MF_01363"/>
    </source>
</evidence>
<evidence type="ECO:0000305" key="2"/>
<accession>P56046</accession>